<name>TYSY_YERPA</name>
<protein>
    <recommendedName>
        <fullName evidence="1">Thymidylate synthase</fullName>
        <shortName evidence="1">TS</shortName>
        <shortName evidence="1">TSase</shortName>
        <ecNumber evidence="1">2.1.1.45</ecNumber>
    </recommendedName>
</protein>
<gene>
    <name evidence="1" type="primary">thyA</name>
    <name type="ordered locus">YPA_0485</name>
</gene>
<dbReference type="EC" id="2.1.1.45" evidence="1"/>
<dbReference type="EMBL" id="CP000308">
    <property type="protein sequence ID" value="ABG12453.1"/>
    <property type="molecule type" value="Genomic_DNA"/>
</dbReference>
<dbReference type="RefSeq" id="WP_002211384.1">
    <property type="nucleotide sequence ID" value="NZ_CP009906.1"/>
</dbReference>
<dbReference type="SMR" id="Q1CAR9"/>
<dbReference type="GeneID" id="57973851"/>
<dbReference type="KEGG" id="ypa:YPA_0485"/>
<dbReference type="UniPathway" id="UPA00575"/>
<dbReference type="Proteomes" id="UP000001971">
    <property type="component" value="Chromosome"/>
</dbReference>
<dbReference type="GO" id="GO:0005829">
    <property type="term" value="C:cytosol"/>
    <property type="evidence" value="ECO:0007669"/>
    <property type="project" value="TreeGrafter"/>
</dbReference>
<dbReference type="GO" id="GO:0004799">
    <property type="term" value="F:thymidylate synthase activity"/>
    <property type="evidence" value="ECO:0007669"/>
    <property type="project" value="UniProtKB-UniRule"/>
</dbReference>
<dbReference type="GO" id="GO:0006231">
    <property type="term" value="P:dTMP biosynthetic process"/>
    <property type="evidence" value="ECO:0007669"/>
    <property type="project" value="UniProtKB-UniRule"/>
</dbReference>
<dbReference type="GO" id="GO:0006235">
    <property type="term" value="P:dTTP biosynthetic process"/>
    <property type="evidence" value="ECO:0007669"/>
    <property type="project" value="UniProtKB-UniRule"/>
</dbReference>
<dbReference type="GO" id="GO:0032259">
    <property type="term" value="P:methylation"/>
    <property type="evidence" value="ECO:0007669"/>
    <property type="project" value="UniProtKB-KW"/>
</dbReference>
<dbReference type="CDD" id="cd00351">
    <property type="entry name" value="TS_Pyrimidine_HMase"/>
    <property type="match status" value="1"/>
</dbReference>
<dbReference type="FunFam" id="3.30.572.10:FF:000001">
    <property type="entry name" value="Thymidylate synthase"/>
    <property type="match status" value="1"/>
</dbReference>
<dbReference type="Gene3D" id="3.30.572.10">
    <property type="entry name" value="Thymidylate synthase/dCMP hydroxymethylase domain"/>
    <property type="match status" value="1"/>
</dbReference>
<dbReference type="HAMAP" id="MF_00008">
    <property type="entry name" value="Thymidy_synth_bact"/>
    <property type="match status" value="1"/>
</dbReference>
<dbReference type="InterPro" id="IPR045097">
    <property type="entry name" value="Thymidate_synth/dCMP_Mease"/>
</dbReference>
<dbReference type="InterPro" id="IPR023451">
    <property type="entry name" value="Thymidate_synth/dCMP_Mease_dom"/>
</dbReference>
<dbReference type="InterPro" id="IPR036926">
    <property type="entry name" value="Thymidate_synth/dCMP_Mease_sf"/>
</dbReference>
<dbReference type="InterPro" id="IPR000398">
    <property type="entry name" value="Thymidylate_synthase"/>
</dbReference>
<dbReference type="InterPro" id="IPR020940">
    <property type="entry name" value="Thymidylate_synthase_AS"/>
</dbReference>
<dbReference type="NCBIfam" id="NF002497">
    <property type="entry name" value="PRK01827.1-3"/>
    <property type="match status" value="1"/>
</dbReference>
<dbReference type="NCBIfam" id="NF002499">
    <property type="entry name" value="PRK01827.1-5"/>
    <property type="match status" value="1"/>
</dbReference>
<dbReference type="NCBIfam" id="TIGR03284">
    <property type="entry name" value="thym_sym"/>
    <property type="match status" value="2"/>
</dbReference>
<dbReference type="PANTHER" id="PTHR11548:SF9">
    <property type="entry name" value="THYMIDYLATE SYNTHASE"/>
    <property type="match status" value="1"/>
</dbReference>
<dbReference type="PANTHER" id="PTHR11548">
    <property type="entry name" value="THYMIDYLATE SYNTHASE 1"/>
    <property type="match status" value="1"/>
</dbReference>
<dbReference type="Pfam" id="PF00303">
    <property type="entry name" value="Thymidylat_synt"/>
    <property type="match status" value="1"/>
</dbReference>
<dbReference type="PRINTS" id="PR00108">
    <property type="entry name" value="THYMDSNTHASE"/>
</dbReference>
<dbReference type="SUPFAM" id="SSF55831">
    <property type="entry name" value="Thymidylate synthase/dCMP hydroxymethylase"/>
    <property type="match status" value="1"/>
</dbReference>
<dbReference type="PROSITE" id="PS00091">
    <property type="entry name" value="THYMIDYLATE_SYNTHASE"/>
    <property type="match status" value="1"/>
</dbReference>
<evidence type="ECO:0000255" key="1">
    <source>
        <dbReference type="HAMAP-Rule" id="MF_00008"/>
    </source>
</evidence>
<feature type="chain" id="PRO_1000000706" description="Thymidylate synthase">
    <location>
        <begin position="1"/>
        <end position="264"/>
    </location>
</feature>
<feature type="active site" description="Nucleophile" evidence="1">
    <location>
        <position position="146"/>
    </location>
</feature>
<feature type="binding site" description="in other chain" evidence="1">
    <location>
        <position position="21"/>
    </location>
    <ligand>
        <name>dUMP</name>
        <dbReference type="ChEBI" id="CHEBI:246422"/>
        <note>ligand shared between dimeric partners</note>
    </ligand>
</feature>
<feature type="binding site" evidence="1">
    <location>
        <position position="51"/>
    </location>
    <ligand>
        <name>(6R)-5,10-methylene-5,6,7,8-tetrahydrofolate</name>
        <dbReference type="ChEBI" id="CHEBI:15636"/>
    </ligand>
</feature>
<feature type="binding site" evidence="1">
    <location>
        <begin position="126"/>
        <end position="127"/>
    </location>
    <ligand>
        <name>dUMP</name>
        <dbReference type="ChEBI" id="CHEBI:246422"/>
        <note>ligand shared between dimeric partners</note>
    </ligand>
</feature>
<feature type="binding site" description="in other chain" evidence="1">
    <location>
        <begin position="166"/>
        <end position="169"/>
    </location>
    <ligand>
        <name>dUMP</name>
        <dbReference type="ChEBI" id="CHEBI:246422"/>
        <note>ligand shared between dimeric partners</note>
    </ligand>
</feature>
<feature type="binding site" evidence="1">
    <location>
        <position position="169"/>
    </location>
    <ligand>
        <name>(6R)-5,10-methylene-5,6,7,8-tetrahydrofolate</name>
        <dbReference type="ChEBI" id="CHEBI:15636"/>
    </ligand>
</feature>
<feature type="binding site" description="in other chain" evidence="1">
    <location>
        <position position="177"/>
    </location>
    <ligand>
        <name>dUMP</name>
        <dbReference type="ChEBI" id="CHEBI:246422"/>
        <note>ligand shared between dimeric partners</note>
    </ligand>
</feature>
<feature type="binding site" description="in other chain" evidence="1">
    <location>
        <begin position="207"/>
        <end position="209"/>
    </location>
    <ligand>
        <name>dUMP</name>
        <dbReference type="ChEBI" id="CHEBI:246422"/>
        <note>ligand shared between dimeric partners</note>
    </ligand>
</feature>
<feature type="binding site" evidence="1">
    <location>
        <position position="263"/>
    </location>
    <ligand>
        <name>(6R)-5,10-methylene-5,6,7,8-tetrahydrofolate</name>
        <dbReference type="ChEBI" id="CHEBI:15636"/>
    </ligand>
</feature>
<reference key="1">
    <citation type="journal article" date="2006" name="J. Bacteriol.">
        <title>Complete genome sequence of Yersinia pestis strains Antiqua and Nepal516: evidence of gene reduction in an emerging pathogen.</title>
        <authorList>
            <person name="Chain P.S.G."/>
            <person name="Hu P."/>
            <person name="Malfatti S.A."/>
            <person name="Radnedge L."/>
            <person name="Larimer F."/>
            <person name="Vergez L.M."/>
            <person name="Worsham P."/>
            <person name="Chu M.C."/>
            <person name="Andersen G.L."/>
        </authorList>
    </citation>
    <scope>NUCLEOTIDE SEQUENCE [LARGE SCALE GENOMIC DNA]</scope>
    <source>
        <strain>Antiqua</strain>
    </source>
</reference>
<sequence length="264" mass="30111">MKQYLDLMKKVLEEGTPKADRTGTGTLSIFGHQMRFNLQDGFPLVTTKRCHLRSIIHELLWFLNGDTNIAYLKENNVSIWDEWADENGDLGPIYGKQWRAWGAADGRKIDQLSNVVNQLKQDPDSRRIIVSAWNVGELDQMALAPCHAFFQFYVADGKLSCQLYQRSCDVFLGLPFNIASYALLVHMMAQQCDLAVGDFVWTGGDTHLYSNHIDQAHLQLSREPRVLPKLVIKRKPDSLFDYHFDDFDIEGYDPHPGIKAPIAI</sequence>
<accession>Q1CAR9</accession>
<proteinExistence type="inferred from homology"/>
<organism>
    <name type="scientific">Yersinia pestis bv. Antiqua (strain Antiqua)</name>
    <dbReference type="NCBI Taxonomy" id="360102"/>
    <lineage>
        <taxon>Bacteria</taxon>
        <taxon>Pseudomonadati</taxon>
        <taxon>Pseudomonadota</taxon>
        <taxon>Gammaproteobacteria</taxon>
        <taxon>Enterobacterales</taxon>
        <taxon>Yersiniaceae</taxon>
        <taxon>Yersinia</taxon>
    </lineage>
</organism>
<comment type="function">
    <text evidence="1">Catalyzes the reductive methylation of 2'-deoxyuridine-5'-monophosphate (dUMP) to 2'-deoxythymidine-5'-monophosphate (dTMP) while utilizing 5,10-methylenetetrahydrofolate (mTHF) as the methyl donor and reductant in the reaction, yielding dihydrofolate (DHF) as a by-product. This enzymatic reaction provides an intracellular de novo source of dTMP, an essential precursor for DNA biosynthesis.</text>
</comment>
<comment type="catalytic activity">
    <reaction evidence="1">
        <text>dUMP + (6R)-5,10-methylene-5,6,7,8-tetrahydrofolate = 7,8-dihydrofolate + dTMP</text>
        <dbReference type="Rhea" id="RHEA:12104"/>
        <dbReference type="ChEBI" id="CHEBI:15636"/>
        <dbReference type="ChEBI" id="CHEBI:57451"/>
        <dbReference type="ChEBI" id="CHEBI:63528"/>
        <dbReference type="ChEBI" id="CHEBI:246422"/>
        <dbReference type="EC" id="2.1.1.45"/>
    </reaction>
</comment>
<comment type="pathway">
    <text evidence="1">Pyrimidine metabolism; dTTP biosynthesis.</text>
</comment>
<comment type="subunit">
    <text evidence="1">Homodimer.</text>
</comment>
<comment type="subcellular location">
    <subcellularLocation>
        <location evidence="1">Cytoplasm</location>
    </subcellularLocation>
</comment>
<comment type="similarity">
    <text evidence="1">Belongs to the thymidylate synthase family. Bacterial-type ThyA subfamily.</text>
</comment>
<keyword id="KW-0963">Cytoplasm</keyword>
<keyword id="KW-0489">Methyltransferase</keyword>
<keyword id="KW-0545">Nucleotide biosynthesis</keyword>
<keyword id="KW-0808">Transferase</keyword>